<protein>
    <recommendedName>
        <fullName>Putative calcium-binding protein CML23</fullName>
    </recommendedName>
    <alternativeName>
        <fullName>Calmodulin-like protein 23</fullName>
    </alternativeName>
</protein>
<keyword id="KW-0106">Calcium</keyword>
<keyword id="KW-0479">Metal-binding</keyword>
<keyword id="KW-1185">Reference proteome</keyword>
<keyword id="KW-0677">Repeat</keyword>
<sequence length="151" mass="16839">MVASDEFRRVFGSFDQDGDGKISATELRLCVKASLGEDMPDEEVQALMALADTDGDGLLDEEEFVRLVTEMEADGDEEEDDDDETCRCLREAFAMYEMEGRGCITPLSLKLMLSKLGTHLDVAECQAMICRFDMNGDGVLTFDEFKTMMMA</sequence>
<gene>
    <name type="primary">CML23</name>
    <name type="ordered locus">Os01g0955400</name>
    <name type="ordered locus">LOC_Os01g72540</name>
    <name type="ORF">B1139B11.18</name>
    <name type="ORF">OsJ_004699</name>
</gene>
<name>CML23_ORYSJ</name>
<organism>
    <name type="scientific">Oryza sativa subsp. japonica</name>
    <name type="common">Rice</name>
    <dbReference type="NCBI Taxonomy" id="39947"/>
    <lineage>
        <taxon>Eukaryota</taxon>
        <taxon>Viridiplantae</taxon>
        <taxon>Streptophyta</taxon>
        <taxon>Embryophyta</taxon>
        <taxon>Tracheophyta</taxon>
        <taxon>Spermatophyta</taxon>
        <taxon>Magnoliopsida</taxon>
        <taxon>Liliopsida</taxon>
        <taxon>Poales</taxon>
        <taxon>Poaceae</taxon>
        <taxon>BOP clade</taxon>
        <taxon>Oryzoideae</taxon>
        <taxon>Oryzeae</taxon>
        <taxon>Oryzinae</taxon>
        <taxon>Oryza</taxon>
        <taxon>Oryza sativa</taxon>
    </lineage>
</organism>
<accession>Q8RYJ9</accession>
<accession>A0A0P0VD72</accession>
<proteinExistence type="inferred from homology"/>
<feature type="chain" id="PRO_0000338438" description="Putative calcium-binding protein CML23">
    <location>
        <begin position="1"/>
        <end position="151"/>
    </location>
</feature>
<feature type="domain" description="EF-hand 1" evidence="2">
    <location>
        <begin position="2"/>
        <end position="37"/>
    </location>
</feature>
<feature type="domain" description="EF-hand 2" evidence="2">
    <location>
        <begin position="39"/>
        <end position="74"/>
    </location>
</feature>
<feature type="domain" description="EF-hand 3" evidence="2">
    <location>
        <begin position="84"/>
        <end position="119"/>
    </location>
</feature>
<feature type="domain" description="EF-hand 4" evidence="2">
    <location>
        <begin position="120"/>
        <end position="151"/>
    </location>
</feature>
<feature type="binding site" evidence="2">
    <location>
        <position position="15"/>
    </location>
    <ligand>
        <name>Ca(2+)</name>
        <dbReference type="ChEBI" id="CHEBI:29108"/>
        <label>1</label>
    </ligand>
</feature>
<feature type="binding site" evidence="2">
    <location>
        <position position="17"/>
    </location>
    <ligand>
        <name>Ca(2+)</name>
        <dbReference type="ChEBI" id="CHEBI:29108"/>
        <label>1</label>
    </ligand>
</feature>
<feature type="binding site" evidence="2">
    <location>
        <position position="19"/>
    </location>
    <ligand>
        <name>Ca(2+)</name>
        <dbReference type="ChEBI" id="CHEBI:29108"/>
        <label>1</label>
    </ligand>
</feature>
<feature type="binding site" evidence="2">
    <location>
        <position position="21"/>
    </location>
    <ligand>
        <name>Ca(2+)</name>
        <dbReference type="ChEBI" id="CHEBI:29108"/>
        <label>1</label>
    </ligand>
</feature>
<feature type="binding site" evidence="2">
    <location>
        <position position="26"/>
    </location>
    <ligand>
        <name>Ca(2+)</name>
        <dbReference type="ChEBI" id="CHEBI:29108"/>
        <label>1</label>
    </ligand>
</feature>
<feature type="binding site" evidence="2">
    <location>
        <position position="52"/>
    </location>
    <ligand>
        <name>Ca(2+)</name>
        <dbReference type="ChEBI" id="CHEBI:29108"/>
        <label>2</label>
    </ligand>
</feature>
<feature type="binding site" evidence="2">
    <location>
        <position position="54"/>
    </location>
    <ligand>
        <name>Ca(2+)</name>
        <dbReference type="ChEBI" id="CHEBI:29108"/>
        <label>2</label>
    </ligand>
</feature>
<feature type="binding site" evidence="2">
    <location>
        <position position="56"/>
    </location>
    <ligand>
        <name>Ca(2+)</name>
        <dbReference type="ChEBI" id="CHEBI:29108"/>
        <label>2</label>
    </ligand>
</feature>
<feature type="binding site" evidence="2">
    <location>
        <position position="63"/>
    </location>
    <ligand>
        <name>Ca(2+)</name>
        <dbReference type="ChEBI" id="CHEBI:29108"/>
        <label>2</label>
    </ligand>
</feature>
<feature type="binding site" evidence="2">
    <location>
        <position position="133"/>
    </location>
    <ligand>
        <name>Ca(2+)</name>
        <dbReference type="ChEBI" id="CHEBI:29108"/>
        <label>3</label>
    </ligand>
</feature>
<feature type="binding site" evidence="2">
    <location>
        <position position="135"/>
    </location>
    <ligand>
        <name>Ca(2+)</name>
        <dbReference type="ChEBI" id="CHEBI:29108"/>
        <label>3</label>
    </ligand>
</feature>
<feature type="binding site" evidence="2">
    <location>
        <position position="137"/>
    </location>
    <ligand>
        <name>Ca(2+)</name>
        <dbReference type="ChEBI" id="CHEBI:29108"/>
        <label>3</label>
    </ligand>
</feature>
<feature type="binding site" evidence="2">
    <location>
        <position position="144"/>
    </location>
    <ligand>
        <name>Ca(2+)</name>
        <dbReference type="ChEBI" id="CHEBI:29108"/>
        <label>3</label>
    </ligand>
</feature>
<comment type="function">
    <text evidence="1">Potential calcium sensor.</text>
</comment>
<comment type="caution">
    <text evidence="3">Although assigned as a calmodulin family member by PubMed:17263873, it only contains EF-hand domains.</text>
</comment>
<dbReference type="EMBL" id="AP004368">
    <property type="protein sequence ID" value="BAB90782.1"/>
    <property type="molecule type" value="Genomic_DNA"/>
</dbReference>
<dbReference type="EMBL" id="AP014957">
    <property type="protein sequence ID" value="BAS76278.1"/>
    <property type="molecule type" value="Genomic_DNA"/>
</dbReference>
<dbReference type="EMBL" id="CM000138">
    <property type="protein sequence ID" value="EAZ14874.1"/>
    <property type="molecule type" value="Genomic_DNA"/>
</dbReference>
<dbReference type="SMR" id="Q8RYJ9"/>
<dbReference type="FunCoup" id="Q8RYJ9">
    <property type="interactions" value="191"/>
</dbReference>
<dbReference type="STRING" id="39947.Q8RYJ9"/>
<dbReference type="PaxDb" id="39947-Q8RYJ9"/>
<dbReference type="EnsemblPlants" id="Os01t0955400-00">
    <property type="protein sequence ID" value="Os01t0955400-00"/>
    <property type="gene ID" value="Os01g0955400"/>
</dbReference>
<dbReference type="GeneID" id="107277511"/>
<dbReference type="Gramene" id="Os01t0955400-00">
    <property type="protein sequence ID" value="Os01t0955400-00"/>
    <property type="gene ID" value="Os01g0955400"/>
</dbReference>
<dbReference type="KEGG" id="osa:107277511"/>
<dbReference type="eggNOG" id="KOG0027">
    <property type="taxonomic scope" value="Eukaryota"/>
</dbReference>
<dbReference type="HOGENOM" id="CLU_061288_20_6_1"/>
<dbReference type="InParanoid" id="Q8RYJ9"/>
<dbReference type="OMA" id="PGSLKMM"/>
<dbReference type="OrthoDB" id="26525at2759"/>
<dbReference type="Proteomes" id="UP000000763">
    <property type="component" value="Chromosome 1"/>
</dbReference>
<dbReference type="Proteomes" id="UP000007752">
    <property type="component" value="Chromosome 1"/>
</dbReference>
<dbReference type="Proteomes" id="UP000059680">
    <property type="component" value="Chromosome 1"/>
</dbReference>
<dbReference type="GO" id="GO:0005509">
    <property type="term" value="F:calcium ion binding"/>
    <property type="evidence" value="ECO:0007669"/>
    <property type="project" value="InterPro"/>
</dbReference>
<dbReference type="CDD" id="cd00051">
    <property type="entry name" value="EFh"/>
    <property type="match status" value="1"/>
</dbReference>
<dbReference type="FunFam" id="1.10.238.10:FF:000292">
    <property type="entry name" value="Calcium-binding protein CML38"/>
    <property type="match status" value="1"/>
</dbReference>
<dbReference type="FunFam" id="1.10.238.10:FF:000440">
    <property type="entry name" value="Probable calcium-binding protein CML31"/>
    <property type="match status" value="1"/>
</dbReference>
<dbReference type="Gene3D" id="1.10.238.10">
    <property type="entry name" value="EF-hand"/>
    <property type="match status" value="2"/>
</dbReference>
<dbReference type="InterPro" id="IPR011992">
    <property type="entry name" value="EF-hand-dom_pair"/>
</dbReference>
<dbReference type="InterPro" id="IPR018247">
    <property type="entry name" value="EF_Hand_1_Ca_BS"/>
</dbReference>
<dbReference type="InterPro" id="IPR002048">
    <property type="entry name" value="EF_hand_dom"/>
</dbReference>
<dbReference type="InterPro" id="IPR039647">
    <property type="entry name" value="EF_hand_pair_protein_CML-like"/>
</dbReference>
<dbReference type="PANTHER" id="PTHR10891">
    <property type="entry name" value="EF-HAND CALCIUM-BINDING DOMAIN CONTAINING PROTEIN"/>
    <property type="match status" value="1"/>
</dbReference>
<dbReference type="Pfam" id="PF13499">
    <property type="entry name" value="EF-hand_7"/>
    <property type="match status" value="1"/>
</dbReference>
<dbReference type="Pfam" id="PF13833">
    <property type="entry name" value="EF-hand_8"/>
    <property type="match status" value="1"/>
</dbReference>
<dbReference type="SMART" id="SM00054">
    <property type="entry name" value="EFh"/>
    <property type="match status" value="4"/>
</dbReference>
<dbReference type="SUPFAM" id="SSF47473">
    <property type="entry name" value="EF-hand"/>
    <property type="match status" value="1"/>
</dbReference>
<dbReference type="PROSITE" id="PS00018">
    <property type="entry name" value="EF_HAND_1"/>
    <property type="match status" value="3"/>
</dbReference>
<dbReference type="PROSITE" id="PS50222">
    <property type="entry name" value="EF_HAND_2"/>
    <property type="match status" value="4"/>
</dbReference>
<reference key="1">
    <citation type="journal article" date="2002" name="Nature">
        <title>The genome sequence and structure of rice chromosome 1.</title>
        <authorList>
            <person name="Sasaki T."/>
            <person name="Matsumoto T."/>
            <person name="Yamamoto K."/>
            <person name="Sakata K."/>
            <person name="Baba T."/>
            <person name="Katayose Y."/>
            <person name="Wu J."/>
            <person name="Niimura Y."/>
            <person name="Cheng Z."/>
            <person name="Nagamura Y."/>
            <person name="Antonio B.A."/>
            <person name="Kanamori H."/>
            <person name="Hosokawa S."/>
            <person name="Masukawa M."/>
            <person name="Arikawa K."/>
            <person name="Chiden Y."/>
            <person name="Hayashi M."/>
            <person name="Okamoto M."/>
            <person name="Ando T."/>
            <person name="Aoki H."/>
            <person name="Arita K."/>
            <person name="Hamada M."/>
            <person name="Harada C."/>
            <person name="Hijishita S."/>
            <person name="Honda M."/>
            <person name="Ichikawa Y."/>
            <person name="Idonuma A."/>
            <person name="Iijima M."/>
            <person name="Ikeda M."/>
            <person name="Ikeno M."/>
            <person name="Ito S."/>
            <person name="Ito T."/>
            <person name="Ito Y."/>
            <person name="Ito Y."/>
            <person name="Iwabuchi A."/>
            <person name="Kamiya K."/>
            <person name="Karasawa W."/>
            <person name="Katagiri S."/>
            <person name="Kikuta A."/>
            <person name="Kobayashi N."/>
            <person name="Kono I."/>
            <person name="Machita K."/>
            <person name="Maehara T."/>
            <person name="Mizuno H."/>
            <person name="Mizubayashi T."/>
            <person name="Mukai Y."/>
            <person name="Nagasaki H."/>
            <person name="Nakashima M."/>
            <person name="Nakama Y."/>
            <person name="Nakamichi Y."/>
            <person name="Nakamura M."/>
            <person name="Namiki N."/>
            <person name="Negishi M."/>
            <person name="Ohta I."/>
            <person name="Ono N."/>
            <person name="Saji S."/>
            <person name="Sakai K."/>
            <person name="Shibata M."/>
            <person name="Shimokawa T."/>
            <person name="Shomura A."/>
            <person name="Song J."/>
            <person name="Takazaki Y."/>
            <person name="Terasawa K."/>
            <person name="Tsuji K."/>
            <person name="Waki K."/>
            <person name="Yamagata H."/>
            <person name="Yamane H."/>
            <person name="Yoshiki S."/>
            <person name="Yoshihara R."/>
            <person name="Yukawa K."/>
            <person name="Zhong H."/>
            <person name="Iwama H."/>
            <person name="Endo T."/>
            <person name="Ito H."/>
            <person name="Hahn J.H."/>
            <person name="Kim H.-I."/>
            <person name="Eun M.-Y."/>
            <person name="Yano M."/>
            <person name="Jiang J."/>
            <person name="Gojobori T."/>
        </authorList>
    </citation>
    <scope>NUCLEOTIDE SEQUENCE [LARGE SCALE GENOMIC DNA]</scope>
    <source>
        <strain>cv. Nipponbare</strain>
    </source>
</reference>
<reference key="2">
    <citation type="journal article" date="2005" name="Nature">
        <title>The map-based sequence of the rice genome.</title>
        <authorList>
            <consortium name="International rice genome sequencing project (IRGSP)"/>
        </authorList>
    </citation>
    <scope>NUCLEOTIDE SEQUENCE [LARGE SCALE GENOMIC DNA]</scope>
    <source>
        <strain>cv. Nipponbare</strain>
    </source>
</reference>
<reference key="3">
    <citation type="journal article" date="2013" name="Rice">
        <title>Improvement of the Oryza sativa Nipponbare reference genome using next generation sequence and optical map data.</title>
        <authorList>
            <person name="Kawahara Y."/>
            <person name="de la Bastide M."/>
            <person name="Hamilton J.P."/>
            <person name="Kanamori H."/>
            <person name="McCombie W.R."/>
            <person name="Ouyang S."/>
            <person name="Schwartz D.C."/>
            <person name="Tanaka T."/>
            <person name="Wu J."/>
            <person name="Zhou S."/>
            <person name="Childs K.L."/>
            <person name="Davidson R.M."/>
            <person name="Lin H."/>
            <person name="Quesada-Ocampo L."/>
            <person name="Vaillancourt B."/>
            <person name="Sakai H."/>
            <person name="Lee S.S."/>
            <person name="Kim J."/>
            <person name="Numa H."/>
            <person name="Itoh T."/>
            <person name="Buell C.R."/>
            <person name="Matsumoto T."/>
        </authorList>
    </citation>
    <scope>GENOME REANNOTATION</scope>
    <source>
        <strain>cv. Nipponbare</strain>
    </source>
</reference>
<reference key="4">
    <citation type="journal article" date="2005" name="PLoS Biol.">
        <title>The genomes of Oryza sativa: a history of duplications.</title>
        <authorList>
            <person name="Yu J."/>
            <person name="Wang J."/>
            <person name="Lin W."/>
            <person name="Li S."/>
            <person name="Li H."/>
            <person name="Zhou J."/>
            <person name="Ni P."/>
            <person name="Dong W."/>
            <person name="Hu S."/>
            <person name="Zeng C."/>
            <person name="Zhang J."/>
            <person name="Zhang Y."/>
            <person name="Li R."/>
            <person name="Xu Z."/>
            <person name="Li S."/>
            <person name="Li X."/>
            <person name="Zheng H."/>
            <person name="Cong L."/>
            <person name="Lin L."/>
            <person name="Yin J."/>
            <person name="Geng J."/>
            <person name="Li G."/>
            <person name="Shi J."/>
            <person name="Liu J."/>
            <person name="Lv H."/>
            <person name="Li J."/>
            <person name="Wang J."/>
            <person name="Deng Y."/>
            <person name="Ran L."/>
            <person name="Shi X."/>
            <person name="Wang X."/>
            <person name="Wu Q."/>
            <person name="Li C."/>
            <person name="Ren X."/>
            <person name="Wang J."/>
            <person name="Wang X."/>
            <person name="Li D."/>
            <person name="Liu D."/>
            <person name="Zhang X."/>
            <person name="Ji Z."/>
            <person name="Zhao W."/>
            <person name="Sun Y."/>
            <person name="Zhang Z."/>
            <person name="Bao J."/>
            <person name="Han Y."/>
            <person name="Dong L."/>
            <person name="Ji J."/>
            <person name="Chen P."/>
            <person name="Wu S."/>
            <person name="Liu J."/>
            <person name="Xiao Y."/>
            <person name="Bu D."/>
            <person name="Tan J."/>
            <person name="Yang L."/>
            <person name="Ye C."/>
            <person name="Zhang J."/>
            <person name="Xu J."/>
            <person name="Zhou Y."/>
            <person name="Yu Y."/>
            <person name="Zhang B."/>
            <person name="Zhuang S."/>
            <person name="Wei H."/>
            <person name="Liu B."/>
            <person name="Lei M."/>
            <person name="Yu H."/>
            <person name="Li Y."/>
            <person name="Xu H."/>
            <person name="Wei S."/>
            <person name="He X."/>
            <person name="Fang L."/>
            <person name="Zhang Z."/>
            <person name="Zhang Y."/>
            <person name="Huang X."/>
            <person name="Su Z."/>
            <person name="Tong W."/>
            <person name="Li J."/>
            <person name="Tong Z."/>
            <person name="Li S."/>
            <person name="Ye J."/>
            <person name="Wang L."/>
            <person name="Fang L."/>
            <person name="Lei T."/>
            <person name="Chen C.-S."/>
            <person name="Chen H.-C."/>
            <person name="Xu Z."/>
            <person name="Li H."/>
            <person name="Huang H."/>
            <person name="Zhang F."/>
            <person name="Xu H."/>
            <person name="Li N."/>
            <person name="Zhao C."/>
            <person name="Li S."/>
            <person name="Dong L."/>
            <person name="Huang Y."/>
            <person name="Li L."/>
            <person name="Xi Y."/>
            <person name="Qi Q."/>
            <person name="Li W."/>
            <person name="Zhang B."/>
            <person name="Hu W."/>
            <person name="Zhang Y."/>
            <person name="Tian X."/>
            <person name="Jiao Y."/>
            <person name="Liang X."/>
            <person name="Jin J."/>
            <person name="Gao L."/>
            <person name="Zheng W."/>
            <person name="Hao B."/>
            <person name="Liu S.-M."/>
            <person name="Wang W."/>
            <person name="Yuan L."/>
            <person name="Cao M."/>
            <person name="McDermott J."/>
            <person name="Samudrala R."/>
            <person name="Wang J."/>
            <person name="Wong G.K.-S."/>
            <person name="Yang H."/>
        </authorList>
    </citation>
    <scope>NUCLEOTIDE SEQUENCE [LARGE SCALE GENOMIC DNA]</scope>
    <source>
        <strain>cv. Nipponbare</strain>
    </source>
</reference>
<reference key="5">
    <citation type="journal article" date="2007" name="BMC Plant Biol.">
        <title>Genome-wide identification and analyses of the rice calmodulin and related potential calcium sensor proteins.</title>
        <authorList>
            <person name="Boonburapong B."/>
            <person name="Buaboocha T."/>
        </authorList>
    </citation>
    <scope>GENE FAMILY</scope>
    <scope>NOMENCLATURE</scope>
</reference>
<evidence type="ECO:0000250" key="1"/>
<evidence type="ECO:0000255" key="2">
    <source>
        <dbReference type="PROSITE-ProRule" id="PRU00448"/>
    </source>
</evidence>
<evidence type="ECO:0000305" key="3"/>